<name>FDHE_ECOLC</name>
<evidence type="ECO:0000255" key="1">
    <source>
        <dbReference type="HAMAP-Rule" id="MF_00611"/>
    </source>
</evidence>
<sequence length="309" mass="34689">MSIRIIPQDELGSSEKRTADMIPPLLFPRLKNLYNRRAERLRELAENNPLGDYLRFAALIAHAQEVVLYDHPLEMDLTARIKEASAQGKPPLDIHVLPRDKHWQKLLMALIAELKPEMSGPALAVIENLEKASTQELEDMASALFASDFSSVSSDKAPFIWAALSLYWAQMANLIPGKARAEYGEQRQYCPVCGSMPVSSMVQIGTTQGLRYLHCNLCETEWHVVRVKCSNCEQSGKLHYWSLDDEQAAIKAESCDDCGTYLKILYQEKDPKIEAVADDLASLVLDARMEQEGYARSSINPFLFPGEGE</sequence>
<proteinExistence type="inferred from homology"/>
<dbReference type="EMBL" id="CP000946">
    <property type="protein sequence ID" value="ACA79724.1"/>
    <property type="molecule type" value="Genomic_DNA"/>
</dbReference>
<dbReference type="RefSeq" id="WP_000027705.1">
    <property type="nucleotide sequence ID" value="NZ_MTFT01000008.1"/>
</dbReference>
<dbReference type="SMR" id="B1IVI7"/>
<dbReference type="KEGG" id="ecl:EcolC_4127"/>
<dbReference type="HOGENOM" id="CLU_055275_0_0_6"/>
<dbReference type="GO" id="GO:0005829">
    <property type="term" value="C:cytosol"/>
    <property type="evidence" value="ECO:0007669"/>
    <property type="project" value="TreeGrafter"/>
</dbReference>
<dbReference type="GO" id="GO:0008199">
    <property type="term" value="F:ferric iron binding"/>
    <property type="evidence" value="ECO:0007669"/>
    <property type="project" value="TreeGrafter"/>
</dbReference>
<dbReference type="GO" id="GO:0051604">
    <property type="term" value="P:protein maturation"/>
    <property type="evidence" value="ECO:0007669"/>
    <property type="project" value="TreeGrafter"/>
</dbReference>
<dbReference type="CDD" id="cd16341">
    <property type="entry name" value="FdhE"/>
    <property type="match status" value="1"/>
</dbReference>
<dbReference type="FunFam" id="3.90.1670.10:FF:000001">
    <property type="entry name" value="Protein FdhE"/>
    <property type="match status" value="1"/>
</dbReference>
<dbReference type="Gene3D" id="3.90.1670.10">
    <property type="entry name" value="FdhE-like domain"/>
    <property type="match status" value="1"/>
</dbReference>
<dbReference type="HAMAP" id="MF_00611">
    <property type="entry name" value="FdeH"/>
    <property type="match status" value="1"/>
</dbReference>
<dbReference type="InterPro" id="IPR024064">
    <property type="entry name" value="FdhE-like_sf"/>
</dbReference>
<dbReference type="InterPro" id="IPR056796">
    <property type="entry name" value="FdhE_C"/>
</dbReference>
<dbReference type="InterPro" id="IPR056797">
    <property type="entry name" value="FdhE_central"/>
</dbReference>
<dbReference type="InterPro" id="IPR056774">
    <property type="entry name" value="FdhE_N"/>
</dbReference>
<dbReference type="InterPro" id="IPR006452">
    <property type="entry name" value="Formate_DH_accessory"/>
</dbReference>
<dbReference type="NCBIfam" id="TIGR01562">
    <property type="entry name" value="FdhE"/>
    <property type="match status" value="1"/>
</dbReference>
<dbReference type="NCBIfam" id="NF002925">
    <property type="entry name" value="PRK03564.1"/>
    <property type="match status" value="1"/>
</dbReference>
<dbReference type="PANTHER" id="PTHR37689">
    <property type="entry name" value="PROTEIN FDHE"/>
    <property type="match status" value="1"/>
</dbReference>
<dbReference type="PANTHER" id="PTHR37689:SF1">
    <property type="entry name" value="PROTEIN FDHE"/>
    <property type="match status" value="1"/>
</dbReference>
<dbReference type="Pfam" id="PF24860">
    <property type="entry name" value="FdhE_C"/>
    <property type="match status" value="1"/>
</dbReference>
<dbReference type="Pfam" id="PF24859">
    <property type="entry name" value="FdhE_central"/>
    <property type="match status" value="1"/>
</dbReference>
<dbReference type="Pfam" id="PF04216">
    <property type="entry name" value="FdhE_N"/>
    <property type="match status" value="1"/>
</dbReference>
<dbReference type="PIRSF" id="PIRSF018296">
    <property type="entry name" value="Format_dh_formtn"/>
    <property type="match status" value="1"/>
</dbReference>
<dbReference type="SUPFAM" id="SSF144020">
    <property type="entry name" value="FdhE-like"/>
    <property type="match status" value="1"/>
</dbReference>
<keyword id="KW-0963">Cytoplasm</keyword>
<protein>
    <recommendedName>
        <fullName evidence="1">Protein FdhE</fullName>
    </recommendedName>
</protein>
<gene>
    <name evidence="1" type="primary">fdhE</name>
    <name type="ordered locus">EcolC_4127</name>
</gene>
<organism>
    <name type="scientific">Escherichia coli (strain ATCC 8739 / DSM 1576 / NBRC 3972 / NCIMB 8545 / WDCM 00012 / Crooks)</name>
    <dbReference type="NCBI Taxonomy" id="481805"/>
    <lineage>
        <taxon>Bacteria</taxon>
        <taxon>Pseudomonadati</taxon>
        <taxon>Pseudomonadota</taxon>
        <taxon>Gammaproteobacteria</taxon>
        <taxon>Enterobacterales</taxon>
        <taxon>Enterobacteriaceae</taxon>
        <taxon>Escherichia</taxon>
    </lineage>
</organism>
<reference key="1">
    <citation type="submission" date="2008-02" db="EMBL/GenBank/DDBJ databases">
        <title>Complete sequence of Escherichia coli C str. ATCC 8739.</title>
        <authorList>
            <person name="Copeland A."/>
            <person name="Lucas S."/>
            <person name="Lapidus A."/>
            <person name="Glavina del Rio T."/>
            <person name="Dalin E."/>
            <person name="Tice H."/>
            <person name="Bruce D."/>
            <person name="Goodwin L."/>
            <person name="Pitluck S."/>
            <person name="Kiss H."/>
            <person name="Brettin T."/>
            <person name="Detter J.C."/>
            <person name="Han C."/>
            <person name="Kuske C.R."/>
            <person name="Schmutz J."/>
            <person name="Larimer F."/>
            <person name="Land M."/>
            <person name="Hauser L."/>
            <person name="Kyrpides N."/>
            <person name="Mikhailova N."/>
            <person name="Ingram L."/>
            <person name="Richardson P."/>
        </authorList>
    </citation>
    <scope>NUCLEOTIDE SEQUENCE [LARGE SCALE GENOMIC DNA]</scope>
    <source>
        <strain>ATCC 8739 / DSM 1576 / NBRC 3972 / NCIMB 8545 / WDCM 00012 / Crooks</strain>
    </source>
</reference>
<accession>B1IVI7</accession>
<comment type="function">
    <text evidence="1">Necessary for formate dehydrogenase activity.</text>
</comment>
<comment type="subcellular location">
    <subcellularLocation>
        <location evidence="1">Cytoplasm</location>
    </subcellularLocation>
</comment>
<comment type="similarity">
    <text evidence="1">Belongs to the FdhE family.</text>
</comment>
<feature type="chain" id="PRO_1000082570" description="Protein FdhE">
    <location>
        <begin position="1"/>
        <end position="309"/>
    </location>
</feature>